<organism>
    <name type="scientific">Emericella nidulans (strain FGSC A4 / ATCC 38163 / CBS 112.46 / NRRL 194 / M139)</name>
    <name type="common">Aspergillus nidulans</name>
    <dbReference type="NCBI Taxonomy" id="227321"/>
    <lineage>
        <taxon>Eukaryota</taxon>
        <taxon>Fungi</taxon>
        <taxon>Dikarya</taxon>
        <taxon>Ascomycota</taxon>
        <taxon>Pezizomycotina</taxon>
        <taxon>Eurotiomycetes</taxon>
        <taxon>Eurotiomycetidae</taxon>
        <taxon>Eurotiales</taxon>
        <taxon>Aspergillaceae</taxon>
        <taxon>Aspergillus</taxon>
        <taxon>Aspergillus subgen. Nidulantes</taxon>
    </lineage>
</organism>
<dbReference type="EC" id="2.3.3.5" evidence="4"/>
<dbReference type="EC" id="2.3.3.16" evidence="4"/>
<dbReference type="EMBL" id="AJ249117">
    <property type="protein sequence ID" value="CAB53336.1"/>
    <property type="molecule type" value="Genomic_DNA"/>
</dbReference>
<dbReference type="EMBL" id="AACD01000110">
    <property type="protein sequence ID" value="EAA58179.1"/>
    <property type="molecule type" value="Genomic_DNA"/>
</dbReference>
<dbReference type="EMBL" id="BN001301">
    <property type="protein sequence ID" value="CBF71174.1"/>
    <property type="molecule type" value="Genomic_DNA"/>
</dbReference>
<dbReference type="RefSeq" id="XP_664254.1">
    <property type="nucleotide sequence ID" value="XM_659162.1"/>
</dbReference>
<dbReference type="SMR" id="Q9TEM3"/>
<dbReference type="STRING" id="227321.Q9TEM3"/>
<dbReference type="EnsemblFungi" id="CBF71174">
    <property type="protein sequence ID" value="CBF71174"/>
    <property type="gene ID" value="ANIA_06650"/>
</dbReference>
<dbReference type="KEGG" id="ani:ANIA_06650"/>
<dbReference type="VEuPathDB" id="FungiDB:AN6650"/>
<dbReference type="eggNOG" id="KOG2617">
    <property type="taxonomic scope" value="Eukaryota"/>
</dbReference>
<dbReference type="HOGENOM" id="CLU_022049_2_1_1"/>
<dbReference type="InParanoid" id="Q9TEM3"/>
<dbReference type="OMA" id="IDHGFNA"/>
<dbReference type="OrthoDB" id="8017587at2759"/>
<dbReference type="BRENDA" id="2.3.3.16">
    <property type="organism ID" value="517"/>
</dbReference>
<dbReference type="UniPathway" id="UPA00946"/>
<dbReference type="Proteomes" id="UP000000560">
    <property type="component" value="Chromosome I"/>
</dbReference>
<dbReference type="GO" id="GO:0005759">
    <property type="term" value="C:mitochondrial matrix"/>
    <property type="evidence" value="ECO:0000318"/>
    <property type="project" value="GO_Central"/>
</dbReference>
<dbReference type="GO" id="GO:0050440">
    <property type="term" value="F:2-methylcitrate synthase activity"/>
    <property type="evidence" value="ECO:0000314"/>
    <property type="project" value="UniProtKB"/>
</dbReference>
<dbReference type="GO" id="GO:0004108">
    <property type="term" value="F:citrate (Si)-synthase activity"/>
    <property type="evidence" value="ECO:0000314"/>
    <property type="project" value="AspGD"/>
</dbReference>
<dbReference type="GO" id="GO:0005975">
    <property type="term" value="P:carbohydrate metabolic process"/>
    <property type="evidence" value="ECO:0000318"/>
    <property type="project" value="GO_Central"/>
</dbReference>
<dbReference type="GO" id="GO:0019629">
    <property type="term" value="P:propionate catabolic process, 2-methylcitrate cycle"/>
    <property type="evidence" value="ECO:0007669"/>
    <property type="project" value="EnsemblFungi"/>
</dbReference>
<dbReference type="GO" id="GO:0019679">
    <property type="term" value="P:propionate metabolic process, methylcitrate cycle"/>
    <property type="evidence" value="ECO:0000314"/>
    <property type="project" value="UniProtKB"/>
</dbReference>
<dbReference type="GO" id="GO:0045461">
    <property type="term" value="P:sterigmatocystin biosynthetic process"/>
    <property type="evidence" value="ECO:0000315"/>
    <property type="project" value="AspGD"/>
</dbReference>
<dbReference type="GO" id="GO:0006099">
    <property type="term" value="P:tricarboxylic acid cycle"/>
    <property type="evidence" value="ECO:0000318"/>
    <property type="project" value="GO_Central"/>
</dbReference>
<dbReference type="CDD" id="cd06106">
    <property type="entry name" value="ScCit3_like"/>
    <property type="match status" value="1"/>
</dbReference>
<dbReference type="FunFam" id="1.10.230.10:FF:000001">
    <property type="entry name" value="Citrate synthase"/>
    <property type="match status" value="1"/>
</dbReference>
<dbReference type="FunFam" id="1.10.580.10:FF:000001">
    <property type="entry name" value="Citrate synthase"/>
    <property type="match status" value="1"/>
</dbReference>
<dbReference type="Gene3D" id="1.10.580.10">
    <property type="entry name" value="Citrate Synthase, domain 1"/>
    <property type="match status" value="1"/>
</dbReference>
<dbReference type="Gene3D" id="1.10.230.10">
    <property type="entry name" value="Cytochrome P450-Terp, domain 2"/>
    <property type="match status" value="1"/>
</dbReference>
<dbReference type="InterPro" id="IPR016142">
    <property type="entry name" value="Citrate_synth-like_lrg_a-sub"/>
</dbReference>
<dbReference type="InterPro" id="IPR016143">
    <property type="entry name" value="Citrate_synth-like_sm_a-sub"/>
</dbReference>
<dbReference type="InterPro" id="IPR002020">
    <property type="entry name" value="Citrate_synthase"/>
</dbReference>
<dbReference type="InterPro" id="IPR019810">
    <property type="entry name" value="Citrate_synthase_AS"/>
</dbReference>
<dbReference type="InterPro" id="IPR036969">
    <property type="entry name" value="Citrate_synthase_sf"/>
</dbReference>
<dbReference type="NCBIfam" id="NF007128">
    <property type="entry name" value="PRK09569.1"/>
    <property type="match status" value="1"/>
</dbReference>
<dbReference type="PANTHER" id="PTHR11739">
    <property type="entry name" value="CITRATE SYNTHASE"/>
    <property type="match status" value="1"/>
</dbReference>
<dbReference type="PANTHER" id="PTHR11739:SF15">
    <property type="entry name" value="CITRATE SYNTHASE 3, MITOCHONDRIAL"/>
    <property type="match status" value="1"/>
</dbReference>
<dbReference type="Pfam" id="PF00285">
    <property type="entry name" value="Citrate_synt"/>
    <property type="match status" value="1"/>
</dbReference>
<dbReference type="PRINTS" id="PR00143">
    <property type="entry name" value="CITRTSNTHASE"/>
</dbReference>
<dbReference type="SUPFAM" id="SSF48256">
    <property type="entry name" value="Citrate synthase"/>
    <property type="match status" value="1"/>
</dbReference>
<dbReference type="PROSITE" id="PS00480">
    <property type="entry name" value="CITRATE_SYNTHASE"/>
    <property type="match status" value="1"/>
</dbReference>
<keyword id="KW-0903">Direct protein sequencing</keyword>
<keyword id="KW-0496">Mitochondrion</keyword>
<keyword id="KW-1185">Reference proteome</keyword>
<keyword id="KW-0808">Transferase</keyword>
<keyword id="KW-0809">Transit peptide</keyword>
<name>PRPC_EMENI</name>
<proteinExistence type="evidence at protein level"/>
<evidence type="ECO:0000250" key="1">
    <source>
        <dbReference type="UniProtKB" id="B0YD89"/>
    </source>
</evidence>
<evidence type="ECO:0000250" key="2">
    <source>
        <dbReference type="UniProtKB" id="O34002"/>
    </source>
</evidence>
<evidence type="ECO:0000250" key="3">
    <source>
        <dbReference type="UniProtKB" id="P31660"/>
    </source>
</evidence>
<evidence type="ECO:0000269" key="4">
    <source>
    </source>
</evidence>
<evidence type="ECO:0000269" key="5">
    <source>
    </source>
</evidence>
<evidence type="ECO:0000269" key="6">
    <source>
    </source>
</evidence>
<evidence type="ECO:0000269" key="7">
    <source>
    </source>
</evidence>
<evidence type="ECO:0000269" key="8">
    <source>
    </source>
</evidence>
<evidence type="ECO:0000269" key="9">
    <source>
    </source>
</evidence>
<evidence type="ECO:0000269" key="10">
    <source>
    </source>
</evidence>
<evidence type="ECO:0000303" key="11">
    <source>
    </source>
</evidence>
<evidence type="ECO:0000305" key="12"/>
<evidence type="ECO:0000305" key="13">
    <source>
    </source>
</evidence>
<accession>Q9TEM3</accession>
<accession>C8V1D7</accession>
<accession>Q5AYI0</accession>
<feature type="transit peptide" description="Mitochondrion" evidence="4">
    <location>
        <begin position="1"/>
        <end position="24"/>
    </location>
</feature>
<feature type="chain" id="PRO_0000005469" description="2-methylcitrate synthase, mitochondrial">
    <location>
        <begin position="25"/>
        <end position="460"/>
    </location>
</feature>
<feature type="active site" evidence="2">
    <location>
        <position position="300"/>
    </location>
</feature>
<feature type="active site" evidence="2">
    <location>
        <position position="346"/>
    </location>
</feature>
<feature type="active site" evidence="2">
    <location>
        <position position="403"/>
    </location>
</feature>
<feature type="binding site" description="in chain B" evidence="1">
    <location>
        <position position="69"/>
    </location>
    <ligand>
        <name>CoA</name>
        <dbReference type="ChEBI" id="CHEBI:57287"/>
        <note>ligand shared between homodimeric partners</note>
    </ligand>
</feature>
<feature type="binding site" description="in chain A" evidence="1">
    <location>
        <position position="187"/>
    </location>
    <ligand>
        <name>CoA</name>
        <dbReference type="ChEBI" id="CHEBI:57287"/>
        <note>ligand shared between homodimeric partners</note>
    </ligand>
</feature>
<feature type="binding site" description="in chain A" evidence="1">
    <location>
        <position position="264"/>
    </location>
    <ligand>
        <name>oxaloacetate</name>
        <dbReference type="ChEBI" id="CHEBI:16452"/>
        <note>ligand shared between homodimeric partners</note>
    </ligand>
</feature>
<feature type="binding site" description="in chain B" evidence="1">
    <location>
        <position position="299"/>
    </location>
    <ligand>
        <name>CoA</name>
        <dbReference type="ChEBI" id="CHEBI:57287"/>
        <note>ligand shared between homodimeric partners</note>
    </ligand>
</feature>
<feature type="binding site" description="in chain B" evidence="1">
    <location>
        <position position="341"/>
    </location>
    <ligand>
        <name>CoA</name>
        <dbReference type="ChEBI" id="CHEBI:57287"/>
        <note>ligand shared between homodimeric partners</note>
    </ligand>
</feature>
<feature type="binding site" description="in chain B" evidence="1">
    <location>
        <position position="343"/>
    </location>
    <ligand>
        <name>CoA</name>
        <dbReference type="ChEBI" id="CHEBI:57287"/>
        <note>ligand shared between homodimeric partners</note>
    </ligand>
</feature>
<feature type="binding site" description="in chain B" evidence="1">
    <location>
        <position position="344"/>
    </location>
    <ligand>
        <name>CoA</name>
        <dbReference type="ChEBI" id="CHEBI:57287"/>
        <note>ligand shared between homodimeric partners</note>
    </ligand>
</feature>
<feature type="binding site" description="in chain A" evidence="1">
    <location>
        <position position="346"/>
    </location>
    <ligand>
        <name>oxaloacetate</name>
        <dbReference type="ChEBI" id="CHEBI:16452"/>
        <note>ligand shared between homodimeric partners</note>
    </ligand>
</feature>
<feature type="binding site" description="in chain A" evidence="1">
    <location>
        <position position="355"/>
    </location>
    <ligand>
        <name>oxaloacetate</name>
        <dbReference type="ChEBI" id="CHEBI:16452"/>
        <note>ligand shared between homodimeric partners</note>
    </ligand>
</feature>
<feature type="binding site" description="in chain B" evidence="1">
    <location>
        <position position="395"/>
    </location>
    <ligand>
        <name>CoA</name>
        <dbReference type="ChEBI" id="CHEBI:57287"/>
        <note>ligand shared between homodimeric partners</note>
    </ligand>
</feature>
<feature type="binding site" description="in chain B" evidence="1">
    <location>
        <position position="396"/>
    </location>
    <ligand>
        <name>CoA</name>
        <dbReference type="ChEBI" id="CHEBI:57287"/>
        <note>ligand shared between homodimeric partners</note>
    </ligand>
</feature>
<feature type="binding site" description="in chain B" evidence="1">
    <location>
        <position position="401"/>
    </location>
    <ligand>
        <name>CoA</name>
        <dbReference type="ChEBI" id="CHEBI:57287"/>
        <note>ligand shared between homodimeric partners</note>
    </ligand>
</feature>
<feature type="binding site" description="in chain A" evidence="1">
    <location>
        <position position="429"/>
    </location>
    <ligand>
        <name>oxaloacetate</name>
        <dbReference type="ChEBI" id="CHEBI:16452"/>
        <note>ligand shared between homodimeric partners</note>
    </ligand>
</feature>
<feature type="binding site" description="in chain B" evidence="1">
    <location>
        <position position="449"/>
    </location>
    <ligand>
        <name>oxaloacetate</name>
        <dbReference type="ChEBI" id="CHEBI:16452"/>
        <note>ligand shared between homodimeric partners</note>
    </ligand>
</feature>
<feature type="sequence conflict" description="In Ref. 1; AA sequence." evidence="12" ref="1">
    <original>R</original>
    <variation>K</variation>
    <location>
        <position position="42"/>
    </location>
</feature>
<protein>
    <recommendedName>
        <fullName evidence="12">2-methylcitrate synthase, mitochondrial</fullName>
        <shortName evidence="11">Methylcitrate synthase</shortName>
        <ecNumber evidence="4">2.3.3.5</ecNumber>
    </recommendedName>
    <alternativeName>
        <fullName evidence="3">(2S,3S)-2-methylcitrate synthase</fullName>
    </alternativeName>
    <alternativeName>
        <fullName>Citrate synthase 2</fullName>
        <ecNumber evidence="4">2.3.3.16</ecNumber>
    </alternativeName>
</protein>
<comment type="function">
    <text evidence="4 5 6 7 9 10">Catalyzes the synthesis of (2S,3S)-2-methylcitrate from propionyl-CoA and oxaloacetate and also from acetyl-CoA and oxaloacetate with a greater efficiency. Also has citrate synthase activity and can substitute for the loss of citA activity.</text>
</comment>
<comment type="catalytic activity">
    <reaction evidence="4">
        <text>propanoyl-CoA + oxaloacetate + H2O = (2S,3S)-2-methylcitrate + CoA + H(+)</text>
        <dbReference type="Rhea" id="RHEA:23780"/>
        <dbReference type="ChEBI" id="CHEBI:15377"/>
        <dbReference type="ChEBI" id="CHEBI:15378"/>
        <dbReference type="ChEBI" id="CHEBI:16452"/>
        <dbReference type="ChEBI" id="CHEBI:57287"/>
        <dbReference type="ChEBI" id="CHEBI:57392"/>
        <dbReference type="ChEBI" id="CHEBI:58853"/>
        <dbReference type="EC" id="2.3.3.5"/>
    </reaction>
</comment>
<comment type="catalytic activity">
    <reaction evidence="4">
        <text>oxaloacetate + acetyl-CoA + H2O = citrate + CoA + H(+)</text>
        <dbReference type="Rhea" id="RHEA:16845"/>
        <dbReference type="ChEBI" id="CHEBI:15377"/>
        <dbReference type="ChEBI" id="CHEBI:15378"/>
        <dbReference type="ChEBI" id="CHEBI:16452"/>
        <dbReference type="ChEBI" id="CHEBI:16947"/>
        <dbReference type="ChEBI" id="CHEBI:57287"/>
        <dbReference type="ChEBI" id="CHEBI:57288"/>
        <dbReference type="EC" id="2.3.3.16"/>
    </reaction>
</comment>
<comment type="activity regulation">
    <text evidence="4">Partially inhibited by ATP.</text>
</comment>
<comment type="biophysicochemical properties">
    <kinetics>
        <KM evidence="4">1.7 uM for propionyl-CoA (in the presence of 1 mM oxaloacetate)</KM>
        <KM evidence="4">2.5 uM for acetyl-CoA (in the presence of 1 mM oxaloacetate)</KM>
        <KM evidence="4">0.63 uM for oxaloacetate (in the presence of 100 mM propionyl-CoA)</KM>
    </kinetics>
    <phDependence>
        <text evidence="4">Optimum pH is 8.5-9.5.</text>
    </phDependence>
    <temperatureDependence>
        <text evidence="4">Optimum temperature is 45-52 degrees Celsius.</text>
    </temperatureDependence>
</comment>
<comment type="pathway">
    <text evidence="12">Organic acid metabolism; propanoate degradation.</text>
</comment>
<comment type="subunit">
    <text evidence="13">Homodimer.</text>
</comment>
<comment type="subcellular location">
    <subcellularLocation>
        <location evidence="12">Mitochondrion matrix</location>
    </subcellularLocation>
</comment>
<comment type="induction">
    <text evidence="5 8 10">Expression is highly induced by propionate. Also induced by ethanol. Transcription is subject to CreA-mediated carbon repression.</text>
</comment>
<comment type="disruption phenotype">
    <text evidence="4 5 6 7 9 10">Blocks propionyl-CoA utilization, as well as growth on propionate. Impairs production of several polyketides such as sterigmatocystin.</text>
</comment>
<comment type="similarity">
    <text evidence="12">Belongs to the citrate synthase family.</text>
</comment>
<sequence length="460" mass="50580">MALPLRTARHASRLAQTIGRRGYATAEPDLKSALKAVIPAKRELLAEVKKQGDEVIGEVKVSNVIGGMRGLKSMLWEGSVLDADEGIRFHGKTIKDCQKELPKGPTGTEMLPEAMFWLLLTGEVPSTSQVRAFSKQLAEESHLPDHILDLAKSFPKHMHPMTQISIITAALNTESKFAKLYEKGINKADYWEPTFDDAISLLAKIPRVAALVFRPNEIDVVGRQKLDPAQDWSYNFAELLGKGGANNADFHDLLRLYLALHGDHEGGNVSAHATHLVGSALSDPFLSYSAGLLGLAGPLHGLAAQEVLRWILAMQEKIGTKFTDEDVRAYLWDTLKSGRVVPGYGHGVLRKPDPRFQALMDFAATRKDVLANPVFQLVKKNSEIAPGVLTEHGKTKNPHPNVDAASGVLFYHYGFQQPLYYTVTFGVSRALGPLVQLIWDRALGLPIERPKSINLLGLKK</sequence>
<gene>
    <name evidence="11" type="primary">mcsA</name>
    <name type="ORF">AN6650</name>
</gene>
<reference key="1">
    <citation type="journal article" date="2000" name="Mol. Microbiol.">
        <title>Methylcitrate synthase from Aspergillus nidulans: implications for propionate as an antifungal agent.</title>
        <authorList>
            <person name="Brock M."/>
            <person name="Fischer R."/>
            <person name="Linder D."/>
            <person name="Buckel W."/>
        </authorList>
    </citation>
    <scope>NUCLEOTIDE SEQUENCE [GENOMIC DNA]</scope>
    <scope>PROTEIN SEQUENCE OF 25-58</scope>
    <scope>FUNCTION</scope>
    <scope>CATALYTIC ACTIVITY</scope>
    <scope>BIOPHYSICOCHEMICAL PROPERTIES</scope>
    <scope>ACTIVITY REGULATION</scope>
    <scope>DISRUPTION PHENOTYPE</scope>
    <source>
        <tissue evidence="4">Mycelium</tissue>
    </source>
</reference>
<reference key="2">
    <citation type="journal article" date="2005" name="Nature">
        <title>Sequencing of Aspergillus nidulans and comparative analysis with A. fumigatus and A. oryzae.</title>
        <authorList>
            <person name="Galagan J.E."/>
            <person name="Calvo S.E."/>
            <person name="Cuomo C."/>
            <person name="Ma L.-J."/>
            <person name="Wortman J.R."/>
            <person name="Batzoglou S."/>
            <person name="Lee S.-I."/>
            <person name="Bastuerkmen M."/>
            <person name="Spevak C.C."/>
            <person name="Clutterbuck J."/>
            <person name="Kapitonov V."/>
            <person name="Jurka J."/>
            <person name="Scazzocchio C."/>
            <person name="Farman M.L."/>
            <person name="Butler J."/>
            <person name="Purcell S."/>
            <person name="Harris S."/>
            <person name="Braus G.H."/>
            <person name="Draht O."/>
            <person name="Busch S."/>
            <person name="D'Enfert C."/>
            <person name="Bouchier C."/>
            <person name="Goldman G.H."/>
            <person name="Bell-Pedersen D."/>
            <person name="Griffiths-Jones S."/>
            <person name="Doonan J.H."/>
            <person name="Yu J."/>
            <person name="Vienken K."/>
            <person name="Pain A."/>
            <person name="Freitag M."/>
            <person name="Selker E.U."/>
            <person name="Archer D.B."/>
            <person name="Penalva M.A."/>
            <person name="Oakley B.R."/>
            <person name="Momany M."/>
            <person name="Tanaka T."/>
            <person name="Kumagai T."/>
            <person name="Asai K."/>
            <person name="Machida M."/>
            <person name="Nierman W.C."/>
            <person name="Denning D.W."/>
            <person name="Caddick M.X."/>
            <person name="Hynes M."/>
            <person name="Paoletti M."/>
            <person name="Fischer R."/>
            <person name="Miller B.L."/>
            <person name="Dyer P.S."/>
            <person name="Sachs M.S."/>
            <person name="Osmani S.A."/>
            <person name="Birren B.W."/>
        </authorList>
    </citation>
    <scope>NUCLEOTIDE SEQUENCE [LARGE SCALE GENOMIC DNA]</scope>
    <source>
        <strain>FGSC A4 / ATCC 38163 / CBS 112.46 / NRRL 194 / M139</strain>
    </source>
</reference>
<reference key="3">
    <citation type="journal article" date="2009" name="Fungal Genet. Biol.">
        <title>The 2008 update of the Aspergillus nidulans genome annotation: a community effort.</title>
        <authorList>
            <person name="Wortman J.R."/>
            <person name="Gilsenan J.M."/>
            <person name="Joardar V."/>
            <person name="Deegan J."/>
            <person name="Clutterbuck J."/>
            <person name="Andersen M.R."/>
            <person name="Archer D."/>
            <person name="Bencina M."/>
            <person name="Braus G."/>
            <person name="Coutinho P."/>
            <person name="von Dohren H."/>
            <person name="Doonan J."/>
            <person name="Driessen A.J."/>
            <person name="Durek P."/>
            <person name="Espeso E."/>
            <person name="Fekete E."/>
            <person name="Flipphi M."/>
            <person name="Estrada C.G."/>
            <person name="Geysens S."/>
            <person name="Goldman G."/>
            <person name="de Groot P.W."/>
            <person name="Hansen K."/>
            <person name="Harris S.D."/>
            <person name="Heinekamp T."/>
            <person name="Helmstaedt K."/>
            <person name="Henrissat B."/>
            <person name="Hofmann G."/>
            <person name="Homan T."/>
            <person name="Horio T."/>
            <person name="Horiuchi H."/>
            <person name="James S."/>
            <person name="Jones M."/>
            <person name="Karaffa L."/>
            <person name="Karanyi Z."/>
            <person name="Kato M."/>
            <person name="Keller N."/>
            <person name="Kelly D.E."/>
            <person name="Kiel J.A."/>
            <person name="Kim J.M."/>
            <person name="van der Klei I.J."/>
            <person name="Klis F.M."/>
            <person name="Kovalchuk A."/>
            <person name="Krasevec N."/>
            <person name="Kubicek C.P."/>
            <person name="Liu B."/>
            <person name="Maccabe A."/>
            <person name="Meyer V."/>
            <person name="Mirabito P."/>
            <person name="Miskei M."/>
            <person name="Mos M."/>
            <person name="Mullins J."/>
            <person name="Nelson D.R."/>
            <person name="Nielsen J."/>
            <person name="Oakley B.R."/>
            <person name="Osmani S.A."/>
            <person name="Pakula T."/>
            <person name="Paszewski A."/>
            <person name="Paulsen I."/>
            <person name="Pilsyk S."/>
            <person name="Pocsi I."/>
            <person name="Punt P.J."/>
            <person name="Ram A.F."/>
            <person name="Ren Q."/>
            <person name="Robellet X."/>
            <person name="Robson G."/>
            <person name="Seiboth B."/>
            <person name="van Solingen P."/>
            <person name="Specht T."/>
            <person name="Sun J."/>
            <person name="Taheri-Talesh N."/>
            <person name="Takeshita N."/>
            <person name="Ussery D."/>
            <person name="vanKuyk P.A."/>
            <person name="Visser H."/>
            <person name="van de Vondervoort P.J."/>
            <person name="de Vries R.P."/>
            <person name="Walton J."/>
            <person name="Xiang X."/>
            <person name="Xiong Y."/>
            <person name="Zeng A.P."/>
            <person name="Brandt B.W."/>
            <person name="Cornell M.J."/>
            <person name="van den Hondel C.A."/>
            <person name="Visser J."/>
            <person name="Oliver S.G."/>
            <person name="Turner G."/>
        </authorList>
    </citation>
    <scope>GENOME REANNOTATION</scope>
    <source>
        <strain>FGSC A4 / ATCC 38163 / CBS 112.46 / NRRL 194 / M139</strain>
    </source>
</reference>
<reference key="4">
    <citation type="journal article" date="2004" name="Eur. J. Biochem.">
        <title>On the mechanism of action of the antifungal agent propionate.</title>
        <authorList>
            <person name="Brock M."/>
            <person name="Buckel W."/>
        </authorList>
    </citation>
    <scope>FUNCTION</scope>
    <scope>DISRUPTION PHENOTYPE</scope>
</reference>
<reference key="5">
    <citation type="journal article" date="2004" name="Genetics">
        <title>Connection of propionyl-CoA metabolism to polyketide biosynthesis in Aspergillus nidulans.</title>
        <authorList>
            <person name="Zhang Y.Q."/>
            <person name="Brock M."/>
            <person name="Keller N.P."/>
        </authorList>
    </citation>
    <scope>FUNCTION</scope>
    <scope>DISRUPTION PHENOTYPE</scope>
</reference>
<reference key="6">
    <citation type="journal article" date="2004" name="Mol. Microbiol.">
        <title>Blockage of methylcitrate cycle inhibits polyketide production in Aspergillus nidulans.</title>
        <authorList>
            <person name="Zhang Y.Q."/>
            <person name="Keller N.P."/>
        </authorList>
    </citation>
    <scope>FUNCTION</scope>
    <scope>DISRUPTION PHENOTYPE</scope>
    <scope>INDUCTION</scope>
</reference>
<reference key="7">
    <citation type="journal article" date="2006" name="Genome Biol.">
        <title>Metabolic network driven analysis of genome-wide transcription data from Aspergillus nidulans.</title>
        <authorList>
            <person name="David H."/>
            <person name="Hofmann G."/>
            <person name="Oliveira A.P."/>
            <person name="Jarmer H."/>
            <person name="Nielsen J."/>
        </authorList>
    </citation>
    <scope>INDUCTION</scope>
</reference>
<reference key="8">
    <citation type="journal article" date="2008" name="Mol. Microbiol.">
        <title>Characterization of an acyl-CoA: carboxylate CoA-transferase from Aspergillus nidulans involved in propionyl-CoA detoxification.</title>
        <authorList>
            <person name="Fleck C.B."/>
            <person name="Brock M."/>
        </authorList>
    </citation>
    <scope>FUNCTION</scope>
    <scope>DISRUPTION PHENOTYPE</scope>
</reference>
<reference key="9">
    <citation type="journal article" date="2010" name="Eukaryot. Cell">
        <title>Metabolic and developmental effects resulting from deletion of the citA gene encoding citrate synthase in Aspergillus nidulans.</title>
        <authorList>
            <person name="Murray S.L."/>
            <person name="Hynes M.J."/>
        </authorList>
    </citation>
    <scope>FUNCTION</scope>
    <scope>DISRUPTION PHENOTYPE</scope>
    <scope>INDUCTION</scope>
</reference>